<protein>
    <recommendedName>
        <fullName>Sensor protein DltS</fullName>
        <ecNumber>2.7.13.3</ecNumber>
    </recommendedName>
</protein>
<evidence type="ECO:0000250" key="1"/>
<evidence type="ECO:0000255" key="2"/>
<evidence type="ECO:0000255" key="3">
    <source>
        <dbReference type="PROSITE-ProRule" id="PRU00107"/>
    </source>
</evidence>
<evidence type="ECO:0000305" key="4"/>
<feature type="chain" id="PRO_0000074731" description="Sensor protein DltS">
    <location>
        <begin position="1"/>
        <end position="395"/>
    </location>
</feature>
<feature type="transmembrane region" description="Helical" evidence="2">
    <location>
        <begin position="9"/>
        <end position="29"/>
    </location>
</feature>
<feature type="transmembrane region" description="Helical" evidence="2">
    <location>
        <begin position="136"/>
        <end position="156"/>
    </location>
</feature>
<feature type="domain" description="Histidine kinase" evidence="3">
    <location>
        <begin position="177"/>
        <end position="387"/>
    </location>
</feature>
<feature type="modified residue" description="Phosphohistidine; by autocatalysis" evidence="3">
    <location>
        <position position="180"/>
    </location>
</feature>
<gene>
    <name type="primary">dltS</name>
    <name type="ordered locus">SAG1791</name>
</gene>
<sequence>MFSDLRKKFVFLTMSILIVVVLFLFAVSNRYNQYWDEYDAYRIVKLVAKNDYLGIPGDEPIALVTIDNQKMVKIQSNNTDLTNDVIEKSSLKLLEQGKKSRKWKSFIYSIKEYKDKTYTIAIMDLASYEVPYARRFLILVFTIFGFCLLAAVSLYLSRFIVGPVETEMTREKQFVSDASHELKTPIAAIRANVQVLEQQIPGNRYLDHVVSETKRMEFLIEDLLNLSRLDEKRSKVNFKKLNLSVLCQEVLLTYESLAYEEEKCLNDTIEDDVWIVGEESQIKQILIILLDNAIRHSLSKSAIQFSLKQARRKAILTISNPSAIYSKEVMDNLFERFYQAKDDHADSLSFGLGLSIAKAIVERHKGRIRAYQEKDQLRLEVQLPIDGFWTNTMIN</sequence>
<comment type="function">
    <text evidence="1">Member of the two-component regulatory system DltS/DltR. Regulates the expression of the dlt operon. Probably phosphorylates DltR (By similarity).</text>
</comment>
<comment type="catalytic activity">
    <reaction>
        <text>ATP + protein L-histidine = ADP + protein N-phospho-L-histidine.</text>
        <dbReference type="EC" id="2.7.13.3"/>
    </reaction>
</comment>
<comment type="subcellular location">
    <subcellularLocation>
        <location evidence="4">Cell membrane</location>
        <topology evidence="4">Multi-pass membrane protein</topology>
    </subcellularLocation>
</comment>
<reference key="1">
    <citation type="journal article" date="2002" name="Proc. Natl. Acad. Sci. U.S.A.">
        <title>Complete genome sequence and comparative genomic analysis of an emerging human pathogen, serotype V Streptococcus agalactiae.</title>
        <authorList>
            <person name="Tettelin H."/>
            <person name="Masignani V."/>
            <person name="Cieslewicz M.J."/>
            <person name="Eisen J.A."/>
            <person name="Peterson S.N."/>
            <person name="Wessels M.R."/>
            <person name="Paulsen I.T."/>
            <person name="Nelson K.E."/>
            <person name="Margarit I."/>
            <person name="Read T.D."/>
            <person name="Madoff L.C."/>
            <person name="Wolf A.M."/>
            <person name="Beanan M.J."/>
            <person name="Brinkac L.M."/>
            <person name="Daugherty S.C."/>
            <person name="DeBoy R.T."/>
            <person name="Durkin A.S."/>
            <person name="Kolonay J.F."/>
            <person name="Madupu R."/>
            <person name="Lewis M.R."/>
            <person name="Radune D."/>
            <person name="Fedorova N.B."/>
            <person name="Scanlan D."/>
            <person name="Khouri H.M."/>
            <person name="Mulligan S."/>
            <person name="Carty H.A."/>
            <person name="Cline R.T."/>
            <person name="Van Aken S.E."/>
            <person name="Gill J."/>
            <person name="Scarselli M."/>
            <person name="Mora M."/>
            <person name="Iacobini E.T."/>
            <person name="Brettoni C."/>
            <person name="Galli G."/>
            <person name="Mariani M."/>
            <person name="Vegni F."/>
            <person name="Maione D."/>
            <person name="Rinaudo D."/>
            <person name="Rappuoli R."/>
            <person name="Telford J.L."/>
            <person name="Kasper D.L."/>
            <person name="Grandi G."/>
            <person name="Fraser C.M."/>
        </authorList>
    </citation>
    <scope>NUCLEOTIDE SEQUENCE [LARGE SCALE GENOMIC DNA]</scope>
    <source>
        <strain>ATCC BAA-611 / 2603 V/R</strain>
    </source>
</reference>
<accession>Q8DXQ8</accession>
<organism>
    <name type="scientific">Streptococcus agalactiae serotype V (strain ATCC BAA-611 / 2603 V/R)</name>
    <dbReference type="NCBI Taxonomy" id="208435"/>
    <lineage>
        <taxon>Bacteria</taxon>
        <taxon>Bacillati</taxon>
        <taxon>Bacillota</taxon>
        <taxon>Bacilli</taxon>
        <taxon>Lactobacillales</taxon>
        <taxon>Streptococcaceae</taxon>
        <taxon>Streptococcus</taxon>
    </lineage>
</organism>
<keyword id="KW-0067">ATP-binding</keyword>
<keyword id="KW-1003">Cell membrane</keyword>
<keyword id="KW-0418">Kinase</keyword>
<keyword id="KW-0472">Membrane</keyword>
<keyword id="KW-0547">Nucleotide-binding</keyword>
<keyword id="KW-0597">Phosphoprotein</keyword>
<keyword id="KW-1185">Reference proteome</keyword>
<keyword id="KW-0808">Transferase</keyword>
<keyword id="KW-0812">Transmembrane</keyword>
<keyword id="KW-1133">Transmembrane helix</keyword>
<keyword id="KW-0902">Two-component regulatory system</keyword>
<dbReference type="EC" id="2.7.13.3"/>
<dbReference type="EMBL" id="AE009948">
    <property type="protein sequence ID" value="AAN00654.1"/>
    <property type="molecule type" value="Genomic_DNA"/>
</dbReference>
<dbReference type="RefSeq" id="NP_688781.1">
    <property type="nucleotide sequence ID" value="NC_004116.1"/>
</dbReference>
<dbReference type="RefSeq" id="WP_000490535.1">
    <property type="nucleotide sequence ID" value="NC_004116.1"/>
</dbReference>
<dbReference type="SMR" id="Q8DXQ8"/>
<dbReference type="STRING" id="208435.SAG1791"/>
<dbReference type="GeneID" id="66886630"/>
<dbReference type="KEGG" id="sag:SAG1791"/>
<dbReference type="PATRIC" id="fig|208435.3.peg.1799"/>
<dbReference type="HOGENOM" id="CLU_000445_89_6_9"/>
<dbReference type="OrthoDB" id="9813151at2"/>
<dbReference type="Proteomes" id="UP000000821">
    <property type="component" value="Chromosome"/>
</dbReference>
<dbReference type="GO" id="GO:0005886">
    <property type="term" value="C:plasma membrane"/>
    <property type="evidence" value="ECO:0007669"/>
    <property type="project" value="UniProtKB-SubCell"/>
</dbReference>
<dbReference type="GO" id="GO:0005524">
    <property type="term" value="F:ATP binding"/>
    <property type="evidence" value="ECO:0007669"/>
    <property type="project" value="UniProtKB-KW"/>
</dbReference>
<dbReference type="GO" id="GO:0004721">
    <property type="term" value="F:phosphoprotein phosphatase activity"/>
    <property type="evidence" value="ECO:0007669"/>
    <property type="project" value="TreeGrafter"/>
</dbReference>
<dbReference type="GO" id="GO:0000155">
    <property type="term" value="F:phosphorelay sensor kinase activity"/>
    <property type="evidence" value="ECO:0007669"/>
    <property type="project" value="InterPro"/>
</dbReference>
<dbReference type="GO" id="GO:0016036">
    <property type="term" value="P:cellular response to phosphate starvation"/>
    <property type="evidence" value="ECO:0007669"/>
    <property type="project" value="TreeGrafter"/>
</dbReference>
<dbReference type="CDD" id="cd00075">
    <property type="entry name" value="HATPase"/>
    <property type="match status" value="1"/>
</dbReference>
<dbReference type="CDD" id="cd00082">
    <property type="entry name" value="HisKA"/>
    <property type="match status" value="1"/>
</dbReference>
<dbReference type="FunFam" id="1.10.287.130:FF:000001">
    <property type="entry name" value="Two-component sensor histidine kinase"/>
    <property type="match status" value="1"/>
</dbReference>
<dbReference type="Gene3D" id="1.10.287.130">
    <property type="match status" value="1"/>
</dbReference>
<dbReference type="Gene3D" id="3.30.565.10">
    <property type="entry name" value="Histidine kinase-like ATPase, C-terminal domain"/>
    <property type="match status" value="1"/>
</dbReference>
<dbReference type="InterPro" id="IPR050351">
    <property type="entry name" value="2-comp_sensor_kinase"/>
</dbReference>
<dbReference type="InterPro" id="IPR036890">
    <property type="entry name" value="HATPase_C_sf"/>
</dbReference>
<dbReference type="InterPro" id="IPR005467">
    <property type="entry name" value="His_kinase_dom"/>
</dbReference>
<dbReference type="InterPro" id="IPR003661">
    <property type="entry name" value="HisK_dim/P_dom"/>
</dbReference>
<dbReference type="InterPro" id="IPR036097">
    <property type="entry name" value="HisK_dim/P_sf"/>
</dbReference>
<dbReference type="PANTHER" id="PTHR45453">
    <property type="entry name" value="PHOSPHATE REGULON SENSOR PROTEIN PHOR"/>
    <property type="match status" value="1"/>
</dbReference>
<dbReference type="PANTHER" id="PTHR45453:SF1">
    <property type="entry name" value="PHOSPHATE REGULON SENSOR PROTEIN PHOR"/>
    <property type="match status" value="1"/>
</dbReference>
<dbReference type="Pfam" id="PF02518">
    <property type="entry name" value="HATPase_c"/>
    <property type="match status" value="1"/>
</dbReference>
<dbReference type="Pfam" id="PF00512">
    <property type="entry name" value="HisKA"/>
    <property type="match status" value="1"/>
</dbReference>
<dbReference type="SMART" id="SM00387">
    <property type="entry name" value="HATPase_c"/>
    <property type="match status" value="1"/>
</dbReference>
<dbReference type="SMART" id="SM00388">
    <property type="entry name" value="HisKA"/>
    <property type="match status" value="1"/>
</dbReference>
<dbReference type="SUPFAM" id="SSF55874">
    <property type="entry name" value="ATPase domain of HSP90 chaperone/DNA topoisomerase II/histidine kinase"/>
    <property type="match status" value="1"/>
</dbReference>
<dbReference type="SUPFAM" id="SSF47384">
    <property type="entry name" value="Homodimeric domain of signal transducing histidine kinase"/>
    <property type="match status" value="1"/>
</dbReference>
<dbReference type="PROSITE" id="PS50109">
    <property type="entry name" value="HIS_KIN"/>
    <property type="match status" value="1"/>
</dbReference>
<proteinExistence type="inferred from homology"/>
<name>DLTS_STRA5</name>